<sequence>MILCLRLCLRASRSFFSISTTNNNNNLSRFLFRFSTLPHCAASSSSSSSNLESYYANLILSSHGDSNKPNRKWSSHQFRLLLTDPNLLIRVLNMIRVKPEIAFRFFNWIQRQSDVKQSRQAFAAMLEILAENDLMSEAYLVAERSIDLGMHEIDDLLIDGSFDKLIALKLLDLLLWVYTKKSMAEKFLLSFEKMIRKGFLPSVRNCNIVLKVLRDSRMMNKASAVYETMIEHGIMPTVITFNTMLDSCFKAGDLERVDKIWLEMKRRNIEFSEVTYNILINGFSKNGKMEEARRFHGDMRRSGFAVTPYSFNPLIEGYCKQGLFDDAWGVTDEMLNAGIYPTTSTYNIYICALCDFGRIDDARELLSSMAAPDVVSYNTLMHGYIKMGKFVEASLLFDDLRAGDIHPSIVTYNTLIDGLCESGNLEGAQRLKEEMTTQLIFPDVITYTTLVKGFVKNGNLSMATEVYDEMLRKGIKPDGYAYTTRAVGELRLGDSDKAFRLHEEMVATDHHAPDLTIYNVRIDGLCKVGNLVKAIEFQRKIFRVGLVPDHVTYTTVIRGYLENGQFKMARNLYDEMLRKRLYPSVITYFVLIYGHAKAGRLEQAFQYSTEMKKRGVRPNVMTHNALLYGMCKAGNIDEAYRYLCKMEEEGIPPNKYSYTMLISKNCDFEKWEEVVKLYKEMLDKEIEPDGYTHRALFKHLEKDHESREVEFLERLLLS</sequence>
<proteinExistence type="evidence at transcript level"/>
<accession>P0C7Q9</accession>
<accession>O23127</accession>
<evidence type="ECO:0000255" key="1"/>
<evidence type="ECO:0000305" key="2"/>
<name>PPR56_ARATH</name>
<protein>
    <recommendedName>
        <fullName>Pentatricopeptide repeat-containing protein At1g22960, mitochondrial</fullName>
    </recommendedName>
</protein>
<organism>
    <name type="scientific">Arabidopsis thaliana</name>
    <name type="common">Mouse-ear cress</name>
    <dbReference type="NCBI Taxonomy" id="3702"/>
    <lineage>
        <taxon>Eukaryota</taxon>
        <taxon>Viridiplantae</taxon>
        <taxon>Streptophyta</taxon>
        <taxon>Embryophyta</taxon>
        <taxon>Tracheophyta</taxon>
        <taxon>Spermatophyta</taxon>
        <taxon>Magnoliopsida</taxon>
        <taxon>eudicotyledons</taxon>
        <taxon>Gunneridae</taxon>
        <taxon>Pentapetalae</taxon>
        <taxon>rosids</taxon>
        <taxon>malvids</taxon>
        <taxon>Brassicales</taxon>
        <taxon>Brassicaceae</taxon>
        <taxon>Camelineae</taxon>
        <taxon>Arabidopsis</taxon>
    </lineage>
</organism>
<comment type="subcellular location">
    <subcellularLocation>
        <location evidence="2">Mitochondrion</location>
    </subcellularLocation>
</comment>
<comment type="similarity">
    <text evidence="2">Belongs to the PPR family. P subfamily.</text>
</comment>
<comment type="sequence caution" evidence="2">
    <conflict type="erroneous gene model prediction">
        <sequence resource="EMBL-CDS" id="AAB72163"/>
    </conflict>
    <text>The predicted gene has been split into 2 genes: At1g22950 and At1g22960.</text>
</comment>
<comment type="online information" name="Pentatricopeptide repeat proteins">
    <link uri="https://ppr.plantenergy.uwa.edu.au"/>
</comment>
<feature type="transit peptide" description="Mitochondrion" evidence="1">
    <location>
        <begin position="1"/>
        <end position="11"/>
    </location>
</feature>
<feature type="chain" id="PRO_0000342797" description="Pentatricopeptide repeat-containing protein At1g22960, mitochondrial">
    <location>
        <begin position="12"/>
        <end position="718"/>
    </location>
</feature>
<feature type="repeat" description="PPR 1">
    <location>
        <begin position="167"/>
        <end position="201"/>
    </location>
</feature>
<feature type="repeat" description="PPR 2">
    <location>
        <begin position="202"/>
        <end position="236"/>
    </location>
</feature>
<feature type="repeat" description="PPR 3">
    <location>
        <begin position="237"/>
        <end position="271"/>
    </location>
</feature>
<feature type="repeat" description="PPR 4">
    <location>
        <begin position="272"/>
        <end position="306"/>
    </location>
</feature>
<feature type="repeat" description="PPR 5">
    <location>
        <begin position="307"/>
        <end position="341"/>
    </location>
</feature>
<feature type="repeat" description="PPR 6">
    <location>
        <begin position="342"/>
        <end position="372"/>
    </location>
</feature>
<feature type="repeat" description="PPR 7">
    <location>
        <begin position="373"/>
        <end position="407"/>
    </location>
</feature>
<feature type="repeat" description="PPR 8">
    <location>
        <begin position="408"/>
        <end position="442"/>
    </location>
</feature>
<feature type="repeat" description="PPR 9">
    <location>
        <begin position="443"/>
        <end position="477"/>
    </location>
</feature>
<feature type="repeat" description="PPR 10">
    <location>
        <begin position="478"/>
        <end position="512"/>
    </location>
</feature>
<feature type="repeat" description="PPR 11">
    <location>
        <begin position="514"/>
        <end position="548"/>
    </location>
</feature>
<feature type="repeat" description="PPR 12">
    <location>
        <begin position="549"/>
        <end position="583"/>
    </location>
</feature>
<feature type="repeat" description="PPR 13">
    <location>
        <begin position="584"/>
        <end position="618"/>
    </location>
</feature>
<feature type="repeat" description="PPR 14">
    <location>
        <begin position="619"/>
        <end position="653"/>
    </location>
</feature>
<feature type="repeat" description="PPR 15">
    <location>
        <begin position="654"/>
        <end position="688"/>
    </location>
</feature>
<reference key="1">
    <citation type="journal article" date="2000" name="Nature">
        <title>Sequence and analysis of chromosome 1 of the plant Arabidopsis thaliana.</title>
        <authorList>
            <person name="Theologis A."/>
            <person name="Ecker J.R."/>
            <person name="Palm C.J."/>
            <person name="Federspiel N.A."/>
            <person name="Kaul S."/>
            <person name="White O."/>
            <person name="Alonso J."/>
            <person name="Altafi H."/>
            <person name="Araujo R."/>
            <person name="Bowman C.L."/>
            <person name="Brooks S.Y."/>
            <person name="Buehler E."/>
            <person name="Chan A."/>
            <person name="Chao Q."/>
            <person name="Chen H."/>
            <person name="Cheuk R.F."/>
            <person name="Chin C.W."/>
            <person name="Chung M.K."/>
            <person name="Conn L."/>
            <person name="Conway A.B."/>
            <person name="Conway A.R."/>
            <person name="Creasy T.H."/>
            <person name="Dewar K."/>
            <person name="Dunn P."/>
            <person name="Etgu P."/>
            <person name="Feldblyum T.V."/>
            <person name="Feng J.-D."/>
            <person name="Fong B."/>
            <person name="Fujii C.Y."/>
            <person name="Gill J.E."/>
            <person name="Goldsmith A.D."/>
            <person name="Haas B."/>
            <person name="Hansen N.F."/>
            <person name="Hughes B."/>
            <person name="Huizar L."/>
            <person name="Hunter J.L."/>
            <person name="Jenkins J."/>
            <person name="Johnson-Hopson C."/>
            <person name="Khan S."/>
            <person name="Khaykin E."/>
            <person name="Kim C.J."/>
            <person name="Koo H.L."/>
            <person name="Kremenetskaia I."/>
            <person name="Kurtz D.B."/>
            <person name="Kwan A."/>
            <person name="Lam B."/>
            <person name="Langin-Hooper S."/>
            <person name="Lee A."/>
            <person name="Lee J.M."/>
            <person name="Lenz C.A."/>
            <person name="Li J.H."/>
            <person name="Li Y.-P."/>
            <person name="Lin X."/>
            <person name="Liu S.X."/>
            <person name="Liu Z.A."/>
            <person name="Luros J.S."/>
            <person name="Maiti R."/>
            <person name="Marziali A."/>
            <person name="Militscher J."/>
            <person name="Miranda M."/>
            <person name="Nguyen M."/>
            <person name="Nierman W.C."/>
            <person name="Osborne B.I."/>
            <person name="Pai G."/>
            <person name="Peterson J."/>
            <person name="Pham P.K."/>
            <person name="Rizzo M."/>
            <person name="Rooney T."/>
            <person name="Rowley D."/>
            <person name="Sakano H."/>
            <person name="Salzberg S.L."/>
            <person name="Schwartz J.R."/>
            <person name="Shinn P."/>
            <person name="Southwick A.M."/>
            <person name="Sun H."/>
            <person name="Tallon L.J."/>
            <person name="Tambunga G."/>
            <person name="Toriumi M.J."/>
            <person name="Town C.D."/>
            <person name="Utterback T."/>
            <person name="Van Aken S."/>
            <person name="Vaysberg M."/>
            <person name="Vysotskaia V.S."/>
            <person name="Walker M."/>
            <person name="Wu D."/>
            <person name="Yu G."/>
            <person name="Fraser C.M."/>
            <person name="Venter J.C."/>
            <person name="Davis R.W."/>
        </authorList>
    </citation>
    <scope>NUCLEOTIDE SEQUENCE [LARGE SCALE GENOMIC DNA]</scope>
    <source>
        <strain>cv. Columbia</strain>
    </source>
</reference>
<reference key="2">
    <citation type="journal article" date="2017" name="Plant J.">
        <title>Araport11: a complete reannotation of the Arabidopsis thaliana reference genome.</title>
        <authorList>
            <person name="Cheng C.Y."/>
            <person name="Krishnakumar V."/>
            <person name="Chan A.P."/>
            <person name="Thibaud-Nissen F."/>
            <person name="Schobel S."/>
            <person name="Town C.D."/>
        </authorList>
    </citation>
    <scope>GENOME REANNOTATION</scope>
    <source>
        <strain>cv. Columbia</strain>
    </source>
</reference>
<reference key="3">
    <citation type="journal article" date="2004" name="Plant Cell">
        <title>Genome-wide analysis of Arabidopsis pentatricopeptide repeat proteins reveals their essential role in organelle biogenesis.</title>
        <authorList>
            <person name="Lurin C."/>
            <person name="Andres C."/>
            <person name="Aubourg S."/>
            <person name="Bellaoui M."/>
            <person name="Bitton F."/>
            <person name="Bruyere C."/>
            <person name="Caboche M."/>
            <person name="Debast C."/>
            <person name="Gualberto J."/>
            <person name="Hoffmann B."/>
            <person name="Lecharny A."/>
            <person name="Le Ret M."/>
            <person name="Martin-Magniette M.-L."/>
            <person name="Mireau H."/>
            <person name="Peeters N."/>
            <person name="Renou J.-P."/>
            <person name="Szurek B."/>
            <person name="Taconnat L."/>
            <person name="Small I."/>
        </authorList>
    </citation>
    <scope>GENE FAMILY</scope>
</reference>
<keyword id="KW-0496">Mitochondrion</keyword>
<keyword id="KW-1185">Reference proteome</keyword>
<keyword id="KW-0677">Repeat</keyword>
<keyword id="KW-0809">Transit peptide</keyword>
<gene>
    <name type="ordered locus">At1g22960</name>
    <name type="ORF">F19G10.9</name>
</gene>
<dbReference type="EMBL" id="AF000657">
    <property type="protein sequence ID" value="AAB72163.1"/>
    <property type="status" value="ALT_SEQ"/>
    <property type="molecule type" value="Genomic_DNA"/>
</dbReference>
<dbReference type="EMBL" id="CP002684">
    <property type="protein sequence ID" value="AEE30315.1"/>
    <property type="molecule type" value="Genomic_DNA"/>
</dbReference>
<dbReference type="EMBL" id="CP002684">
    <property type="protein sequence ID" value="ANM57960.1"/>
    <property type="molecule type" value="Genomic_DNA"/>
</dbReference>
<dbReference type="PIR" id="F86363">
    <property type="entry name" value="F86363"/>
</dbReference>
<dbReference type="RefSeq" id="NP_001319064.1">
    <property type="nucleotide sequence ID" value="NM_001332567.1"/>
</dbReference>
<dbReference type="RefSeq" id="NP_001320434.1">
    <property type="nucleotide sequence ID" value="NM_001332568.1"/>
</dbReference>
<dbReference type="SMR" id="P0C7Q9"/>
<dbReference type="FunCoup" id="P0C7Q9">
    <property type="interactions" value="519"/>
</dbReference>
<dbReference type="STRING" id="3702.P0C7Q9"/>
<dbReference type="GlyGen" id="P0C7Q9">
    <property type="glycosylation" value="1 site"/>
</dbReference>
<dbReference type="PaxDb" id="3702-AT1G22960.1"/>
<dbReference type="ProteomicsDB" id="236651"/>
<dbReference type="EnsemblPlants" id="AT1G22960.1">
    <property type="protein sequence ID" value="AT1G22960.1"/>
    <property type="gene ID" value="AT1G22960"/>
</dbReference>
<dbReference type="EnsemblPlants" id="AT1G22960.2">
    <property type="protein sequence ID" value="AT1G22960.2"/>
    <property type="gene ID" value="AT1G22960"/>
</dbReference>
<dbReference type="GeneID" id="838903"/>
<dbReference type="Gramene" id="AT1G22960.1">
    <property type="protein sequence ID" value="AT1G22960.1"/>
    <property type="gene ID" value="AT1G22960"/>
</dbReference>
<dbReference type="Gramene" id="AT1G22960.2">
    <property type="protein sequence ID" value="AT1G22960.2"/>
    <property type="gene ID" value="AT1G22960"/>
</dbReference>
<dbReference type="KEGG" id="ath:AT1G22960"/>
<dbReference type="Araport" id="AT1G22960"/>
<dbReference type="TAIR" id="AT1G22960"/>
<dbReference type="eggNOG" id="KOG4197">
    <property type="taxonomic scope" value="Eukaryota"/>
</dbReference>
<dbReference type="HOGENOM" id="CLU_002706_49_12_1"/>
<dbReference type="InParanoid" id="P0C7Q9"/>
<dbReference type="OMA" id="FFRWAEA"/>
<dbReference type="PhylomeDB" id="P0C7Q9"/>
<dbReference type="PRO" id="PR:P0C7Q9"/>
<dbReference type="Proteomes" id="UP000006548">
    <property type="component" value="Chromosome 1"/>
</dbReference>
<dbReference type="ExpressionAtlas" id="P0C7Q9">
    <property type="expression patterns" value="baseline and differential"/>
</dbReference>
<dbReference type="GO" id="GO:0005739">
    <property type="term" value="C:mitochondrion"/>
    <property type="evidence" value="ECO:0007669"/>
    <property type="project" value="UniProtKB-SubCell"/>
</dbReference>
<dbReference type="Gene3D" id="1.25.40.10">
    <property type="entry name" value="Tetratricopeptide repeat domain"/>
    <property type="match status" value="7"/>
</dbReference>
<dbReference type="InterPro" id="IPR002885">
    <property type="entry name" value="Pentatricopeptide_rpt"/>
</dbReference>
<dbReference type="InterPro" id="IPR050872">
    <property type="entry name" value="PPR_P_subfamily"/>
</dbReference>
<dbReference type="InterPro" id="IPR011990">
    <property type="entry name" value="TPR-like_helical_dom_sf"/>
</dbReference>
<dbReference type="NCBIfam" id="TIGR00756">
    <property type="entry name" value="PPR"/>
    <property type="match status" value="12"/>
</dbReference>
<dbReference type="PANTHER" id="PTHR46128">
    <property type="entry name" value="MITOCHONDRIAL GROUP I INTRON SPLICING FACTOR CCM1"/>
    <property type="match status" value="1"/>
</dbReference>
<dbReference type="PANTHER" id="PTHR46128:SF145">
    <property type="entry name" value="PENTACOTRIPEPTIDE-REPEAT REGION OF PRORP DOMAIN-CONTAINING PROTEIN"/>
    <property type="match status" value="1"/>
</dbReference>
<dbReference type="Pfam" id="PF01535">
    <property type="entry name" value="PPR"/>
    <property type="match status" value="1"/>
</dbReference>
<dbReference type="Pfam" id="PF13041">
    <property type="entry name" value="PPR_2"/>
    <property type="match status" value="6"/>
</dbReference>
<dbReference type="SUPFAM" id="SSF81901">
    <property type="entry name" value="HCP-like"/>
    <property type="match status" value="1"/>
</dbReference>
<dbReference type="PROSITE" id="PS51375">
    <property type="entry name" value="PPR"/>
    <property type="match status" value="16"/>
</dbReference>